<sequence length="128" mass="15152">MLWKSVLPVALIVLGIHDCSFKFIEIDKNEEEFAMSMEHVLFHFNENQNDDFAYKFLRVRRSLRKKYTQKYLVDLEMGRTLCGKYDEDIDNCPLQEGPGEKKVRCTYIVETRVWVTEFTILNSTCVQT</sequence>
<reference key="1">
    <citation type="journal article" date="2002" name="Biol. Reprod.">
        <title>Identification and characterization of testis- and epididymis-specific genes: cystatin SC and cystatin TE-1.</title>
        <authorList>
            <person name="Li Y."/>
            <person name="Friel P.J."/>
            <person name="Robinson M.O."/>
            <person name="McLean D.J."/>
            <person name="Griswold M.D."/>
        </authorList>
    </citation>
    <scope>NUCLEOTIDE SEQUENCE [MRNA]</scope>
    <source>
        <strain>Sprague-Dawley</strain>
        <tissue>Testis</tissue>
    </source>
</reference>
<name>CST12_RAT</name>
<protein>
    <recommendedName>
        <fullName>Cystatin-12</fullName>
    </recommendedName>
    <alternativeName>
        <fullName>Cystatin TE-1</fullName>
    </alternativeName>
</protein>
<evidence type="ECO:0000250" key="1"/>
<evidence type="ECO:0000255" key="2"/>
<evidence type="ECO:0000305" key="3"/>
<accession>Q8VII2</accession>
<organism>
    <name type="scientific">Rattus norvegicus</name>
    <name type="common">Rat</name>
    <dbReference type="NCBI Taxonomy" id="10116"/>
    <lineage>
        <taxon>Eukaryota</taxon>
        <taxon>Metazoa</taxon>
        <taxon>Chordata</taxon>
        <taxon>Craniata</taxon>
        <taxon>Vertebrata</taxon>
        <taxon>Euteleostomi</taxon>
        <taxon>Mammalia</taxon>
        <taxon>Eutheria</taxon>
        <taxon>Euarchontoglires</taxon>
        <taxon>Glires</taxon>
        <taxon>Rodentia</taxon>
        <taxon>Myomorpha</taxon>
        <taxon>Muroidea</taxon>
        <taxon>Muridae</taxon>
        <taxon>Murinae</taxon>
        <taxon>Rattus</taxon>
    </lineage>
</organism>
<comment type="function">
    <text evidence="1">May play a specialized role in spermatogenesis.</text>
</comment>
<comment type="subcellular location">
    <subcellularLocation>
        <location evidence="3">Secreted</location>
    </subcellularLocation>
</comment>
<comment type="similarity">
    <text evidence="3">Belongs to the cystatin family.</text>
</comment>
<keyword id="KW-1015">Disulfide bond</keyword>
<keyword id="KW-0325">Glycoprotein</keyword>
<keyword id="KW-0646">Protease inhibitor</keyword>
<keyword id="KW-1185">Reference proteome</keyword>
<keyword id="KW-0964">Secreted</keyword>
<keyword id="KW-0732">Signal</keyword>
<keyword id="KW-0789">Thiol protease inhibitor</keyword>
<proteinExistence type="evidence at transcript level"/>
<gene>
    <name type="primary">Cst12</name>
</gene>
<dbReference type="EMBL" id="AF440736">
    <property type="protein sequence ID" value="AAL30842.1"/>
    <property type="molecule type" value="mRNA"/>
</dbReference>
<dbReference type="RefSeq" id="NP_714956.1">
    <property type="nucleotide sequence ID" value="NM_153734.1"/>
</dbReference>
<dbReference type="SMR" id="Q8VII2"/>
<dbReference type="FunCoup" id="Q8VII2">
    <property type="interactions" value="26"/>
</dbReference>
<dbReference type="STRING" id="10116.ENSRNOP00000006608"/>
<dbReference type="GlyCosmos" id="Q8VII2">
    <property type="glycosylation" value="1 site, No reported glycans"/>
</dbReference>
<dbReference type="GlyGen" id="Q8VII2">
    <property type="glycosylation" value="1 site"/>
</dbReference>
<dbReference type="PhosphoSitePlus" id="Q8VII2"/>
<dbReference type="PaxDb" id="10116-ENSRNOP00000006608"/>
<dbReference type="GeneID" id="266776"/>
<dbReference type="KEGG" id="rno:266776"/>
<dbReference type="UCSC" id="RGD:708514">
    <property type="organism name" value="rat"/>
</dbReference>
<dbReference type="AGR" id="RGD:708514"/>
<dbReference type="CTD" id="69362"/>
<dbReference type="RGD" id="708514">
    <property type="gene designation" value="Cst12"/>
</dbReference>
<dbReference type="eggNOG" id="ENOG502TDK9">
    <property type="taxonomic scope" value="Eukaryota"/>
</dbReference>
<dbReference type="InParanoid" id="Q8VII2"/>
<dbReference type="OrthoDB" id="9829654at2759"/>
<dbReference type="PhylomeDB" id="Q8VII2"/>
<dbReference type="PRO" id="PR:Q8VII2"/>
<dbReference type="Proteomes" id="UP000002494">
    <property type="component" value="Unplaced"/>
</dbReference>
<dbReference type="GO" id="GO:0005576">
    <property type="term" value="C:extracellular region"/>
    <property type="evidence" value="ECO:0007669"/>
    <property type="project" value="UniProtKB-SubCell"/>
</dbReference>
<dbReference type="GO" id="GO:0004869">
    <property type="term" value="F:cysteine-type endopeptidase inhibitor activity"/>
    <property type="evidence" value="ECO:0007669"/>
    <property type="project" value="UniProtKB-KW"/>
</dbReference>
<dbReference type="CDD" id="cd00042">
    <property type="entry name" value="CY"/>
    <property type="match status" value="1"/>
</dbReference>
<dbReference type="Gene3D" id="3.10.450.10">
    <property type="match status" value="1"/>
</dbReference>
<dbReference type="InterPro" id="IPR000010">
    <property type="entry name" value="Cystatin_dom"/>
</dbReference>
<dbReference type="InterPro" id="IPR046350">
    <property type="entry name" value="Cystatin_sf"/>
</dbReference>
<dbReference type="InterPro" id="IPR052333">
    <property type="entry name" value="Cystatin_spermatogenesis"/>
</dbReference>
<dbReference type="PANTHER" id="PTHR47393:SF1">
    <property type="entry name" value="CYSTATIN-12"/>
    <property type="match status" value="1"/>
</dbReference>
<dbReference type="PANTHER" id="PTHR47393">
    <property type="entry name" value="CYSTATIN-12-RELATED"/>
    <property type="match status" value="1"/>
</dbReference>
<dbReference type="Pfam" id="PF00031">
    <property type="entry name" value="Cystatin"/>
    <property type="match status" value="1"/>
</dbReference>
<dbReference type="SUPFAM" id="SSF54403">
    <property type="entry name" value="Cystatin/monellin"/>
    <property type="match status" value="1"/>
</dbReference>
<feature type="signal peptide" evidence="2">
    <location>
        <begin position="1"/>
        <end position="21"/>
    </location>
</feature>
<feature type="chain" id="PRO_0000285792" description="Cystatin-12">
    <location>
        <begin position="22"/>
        <end position="128"/>
    </location>
</feature>
<feature type="glycosylation site" description="N-linked (GlcNAc...) asparagine" evidence="2">
    <location>
        <position position="122"/>
    </location>
</feature>
<feature type="disulfide bond" evidence="1">
    <location>
        <begin position="82"/>
        <end position="92"/>
    </location>
</feature>
<feature type="disulfide bond" evidence="1">
    <location>
        <begin position="105"/>
        <end position="125"/>
    </location>
</feature>